<protein>
    <recommendedName>
        <fullName>Vitellogenin</fullName>
    </recommendedName>
    <component>
        <recommendedName>
            <fullName>Vitellin light chain</fullName>
            <shortName>VL</shortName>
        </recommendedName>
    </component>
    <component>
        <recommendedName>
            <fullName>Vitellin light chain rare isoform</fullName>
        </recommendedName>
    </component>
    <component>
        <recommendedName>
            <fullName>Vitellin heavy chain rare isoform</fullName>
        </recommendedName>
    </component>
    <component>
        <recommendedName>
            <fullName>Vitellin heavy chain</fullName>
            <shortName>VH</shortName>
        </recommendedName>
    </component>
</protein>
<organism>
    <name type="scientific">Bombyx mori</name>
    <name type="common">Silk moth</name>
    <dbReference type="NCBI Taxonomy" id="7091"/>
    <lineage>
        <taxon>Eukaryota</taxon>
        <taxon>Metazoa</taxon>
        <taxon>Ecdysozoa</taxon>
        <taxon>Arthropoda</taxon>
        <taxon>Hexapoda</taxon>
        <taxon>Insecta</taxon>
        <taxon>Pterygota</taxon>
        <taxon>Neoptera</taxon>
        <taxon>Endopterygota</taxon>
        <taxon>Lepidoptera</taxon>
        <taxon>Glossata</taxon>
        <taxon>Ditrysia</taxon>
        <taxon>Bombycoidea</taxon>
        <taxon>Bombycidae</taxon>
        <taxon>Bombycinae</taxon>
        <taxon>Bombyx</taxon>
    </lineage>
</organism>
<reference key="1">
    <citation type="journal article" date="1994" name="Biochim. Biophys. Acta">
        <title>Structure and expression of mRNA for vitellogenin in Bombyx mori.</title>
        <authorList>
            <person name="Yano K."/>
            <person name="Sakurai M.T."/>
            <person name="Watabe S."/>
            <person name="Izumi S."/>
            <person name="Tomino S."/>
        </authorList>
    </citation>
    <scope>NUCLEOTIDE SEQUENCE [MRNA]</scope>
    <scope>PROTEIN SEQUENCE OF 16-25 AND 367-380</scope>
    <source>
        <strain>Kinshu X Showa</strain>
        <tissue>Fat body</tissue>
    </source>
</reference>
<reference key="2">
    <citation type="journal article" date="2005" name="Zool. Sci.">
        <title>Release of ecdysteroid-phosphates from egg yolk granules and their dephosphorylation during early embryonic development in silkworm, Bombyx mori.</title>
        <authorList>
            <person name="Yamada R."/>
            <person name="Yamahama Y."/>
            <person name="Sonobe H."/>
        </authorList>
    </citation>
    <scope>SUBCELLULAR LOCATION</scope>
    <scope>TISSUE SPECIFICITY</scope>
</reference>
<dbReference type="EMBL" id="D13160">
    <property type="protein sequence ID" value="BAA02444.1"/>
    <property type="molecule type" value="mRNA"/>
</dbReference>
<dbReference type="EMBL" id="D30733">
    <property type="protein sequence ID" value="BAA06397.1"/>
    <property type="molecule type" value="Genomic_DNA"/>
</dbReference>
<dbReference type="PIR" id="S45289">
    <property type="entry name" value="S45289"/>
</dbReference>
<dbReference type="RefSeq" id="NP_001037309.1">
    <property type="nucleotide sequence ID" value="NM_001043844.1"/>
</dbReference>
<dbReference type="SMR" id="Q27309"/>
<dbReference type="STRING" id="7091.Q27309"/>
<dbReference type="GlyCosmos" id="Q27309">
    <property type="glycosylation" value="5 sites, No reported glycans"/>
</dbReference>
<dbReference type="PaxDb" id="7091-BGIBMGA004585-TA"/>
<dbReference type="EnsemblMetazoa" id="NM_001043844.1">
    <property type="protein sequence ID" value="NP_001037309.1"/>
    <property type="gene ID" value="GeneID_692741"/>
</dbReference>
<dbReference type="GeneID" id="692741"/>
<dbReference type="KEGG" id="bmor:692741"/>
<dbReference type="CTD" id="36421"/>
<dbReference type="eggNOG" id="KOG4338">
    <property type="taxonomic scope" value="Eukaryota"/>
</dbReference>
<dbReference type="HOGENOM" id="CLU_002645_0_0_1"/>
<dbReference type="InParanoid" id="Q27309"/>
<dbReference type="OrthoDB" id="639395at7088"/>
<dbReference type="Proteomes" id="UP000005204">
    <property type="component" value="Unassembled WGS sequence"/>
</dbReference>
<dbReference type="GO" id="GO:0005737">
    <property type="term" value="C:cytoplasm"/>
    <property type="evidence" value="ECO:0007669"/>
    <property type="project" value="UniProtKB-SubCell"/>
</dbReference>
<dbReference type="GO" id="GO:0005576">
    <property type="term" value="C:extracellular region"/>
    <property type="evidence" value="ECO:0007669"/>
    <property type="project" value="UniProtKB-SubCell"/>
</dbReference>
<dbReference type="GO" id="GO:0005319">
    <property type="term" value="F:lipid transporter activity"/>
    <property type="evidence" value="ECO:0007669"/>
    <property type="project" value="InterPro"/>
</dbReference>
<dbReference type="GO" id="GO:0045735">
    <property type="term" value="F:nutrient reservoir activity"/>
    <property type="evidence" value="ECO:0007669"/>
    <property type="project" value="UniProtKB-KW"/>
</dbReference>
<dbReference type="Gene3D" id="2.30.230.10">
    <property type="entry name" value="Lipovitellin, beta-sheet shell regions, chain A"/>
    <property type="match status" value="1"/>
</dbReference>
<dbReference type="Gene3D" id="2.20.80.10">
    <property type="entry name" value="Lipovitellin-phosvitin complex, chain A, domain 4"/>
    <property type="match status" value="1"/>
</dbReference>
<dbReference type="Gene3D" id="1.25.10.20">
    <property type="entry name" value="Vitellinogen, superhelical"/>
    <property type="match status" value="1"/>
</dbReference>
<dbReference type="InterPro" id="IPR015819">
    <property type="entry name" value="Lipid_transp_b-sht_shell"/>
</dbReference>
<dbReference type="InterPro" id="IPR011030">
    <property type="entry name" value="Lipovitellin_superhlx_dom"/>
</dbReference>
<dbReference type="InterPro" id="IPR015816">
    <property type="entry name" value="Vitellinogen_b-sht_N"/>
</dbReference>
<dbReference type="InterPro" id="IPR015255">
    <property type="entry name" value="Vitellinogen_open_b-sht"/>
</dbReference>
<dbReference type="InterPro" id="IPR050733">
    <property type="entry name" value="Vitellogenin/Apolipophorin"/>
</dbReference>
<dbReference type="InterPro" id="IPR001747">
    <property type="entry name" value="Vitellogenin_N"/>
</dbReference>
<dbReference type="InterPro" id="IPR001846">
    <property type="entry name" value="VWF_type-D"/>
</dbReference>
<dbReference type="PANTHER" id="PTHR23345:SF15">
    <property type="entry name" value="VITELLOGENIN 1-RELATED"/>
    <property type="match status" value="1"/>
</dbReference>
<dbReference type="PANTHER" id="PTHR23345">
    <property type="entry name" value="VITELLOGENIN-RELATED"/>
    <property type="match status" value="1"/>
</dbReference>
<dbReference type="Pfam" id="PF09172">
    <property type="entry name" value="Vit_open_b-sht"/>
    <property type="match status" value="1"/>
</dbReference>
<dbReference type="Pfam" id="PF01347">
    <property type="entry name" value="Vitellogenin_N"/>
    <property type="match status" value="1"/>
</dbReference>
<dbReference type="Pfam" id="PF00094">
    <property type="entry name" value="VWD"/>
    <property type="match status" value="1"/>
</dbReference>
<dbReference type="SMART" id="SM01169">
    <property type="entry name" value="DUF1943"/>
    <property type="match status" value="1"/>
</dbReference>
<dbReference type="SMART" id="SM00638">
    <property type="entry name" value="LPD_N"/>
    <property type="match status" value="1"/>
</dbReference>
<dbReference type="SMART" id="SM00216">
    <property type="entry name" value="VWD"/>
    <property type="match status" value="1"/>
</dbReference>
<dbReference type="SUPFAM" id="SSF56968">
    <property type="entry name" value="Lipovitellin-phosvitin complex, beta-sheet shell regions"/>
    <property type="match status" value="2"/>
</dbReference>
<dbReference type="SUPFAM" id="SSF48431">
    <property type="entry name" value="Lipovitellin-phosvitin complex, superhelical domain"/>
    <property type="match status" value="1"/>
</dbReference>
<dbReference type="PROSITE" id="PS51211">
    <property type="entry name" value="VITELLOGENIN"/>
    <property type="match status" value="1"/>
</dbReference>
<dbReference type="PROSITE" id="PS51233">
    <property type="entry name" value="VWFD"/>
    <property type="match status" value="1"/>
</dbReference>
<keyword id="KW-0165">Cleavage on pair of basic residues</keyword>
<keyword id="KW-0963">Cytoplasm</keyword>
<keyword id="KW-0903">Direct protein sequencing</keyword>
<keyword id="KW-1015">Disulfide bond</keyword>
<keyword id="KW-0325">Glycoprotein</keyword>
<keyword id="KW-0597">Phosphoprotein</keyword>
<keyword id="KW-1185">Reference proteome</keyword>
<keyword id="KW-0964">Secreted</keyword>
<keyword id="KW-0732">Signal</keyword>
<keyword id="KW-0758">Storage protein</keyword>
<accession>Q27309</accession>
<name>VIT_BOMMO</name>
<feature type="signal peptide" evidence="6">
    <location>
        <begin position="1"/>
        <end position="15"/>
    </location>
</feature>
<feature type="chain" id="PRO_0000041545" description="Vitellogenin">
    <location>
        <begin position="16"/>
        <end position="1782"/>
    </location>
</feature>
<feature type="chain" id="PRO_0000041546" description="Vitellin light chain">
    <location>
        <begin position="16"/>
        <end position="370"/>
    </location>
</feature>
<feature type="chain" id="PRO_0000041547" description="Vitellin light chain rare isoform">
    <location>
        <begin position="16"/>
        <end position="366"/>
    </location>
</feature>
<feature type="chain" id="PRO_0000041548" description="Vitellin heavy chain rare isoform">
    <location>
        <begin position="367"/>
        <end position="1782"/>
    </location>
</feature>
<feature type="chain" id="PRO_0000041549" description="Vitellin heavy chain">
    <location>
        <begin position="371"/>
        <end position="1782"/>
    </location>
</feature>
<feature type="domain" description="Vitellogenin" evidence="2">
    <location>
        <begin position="34"/>
        <end position="812"/>
    </location>
</feature>
<feature type="domain" description="VWFD" evidence="3">
    <location>
        <begin position="1449"/>
        <end position="1638"/>
    </location>
</feature>
<feature type="region of interest" description="Disordered" evidence="4">
    <location>
        <begin position="333"/>
        <end position="367"/>
    </location>
</feature>
<feature type="region of interest" description="Disordered" evidence="4">
    <location>
        <begin position="379"/>
        <end position="406"/>
    </location>
</feature>
<feature type="compositionally biased region" description="Basic and acidic residues" evidence="4">
    <location>
        <begin position="344"/>
        <end position="358"/>
    </location>
</feature>
<feature type="compositionally biased region" description="Low complexity" evidence="4">
    <location>
        <begin position="386"/>
        <end position="400"/>
    </location>
</feature>
<feature type="glycosylation site" description="N-linked (GlcNAc...) asparagine" evidence="1">
    <location>
        <position position="569"/>
    </location>
</feature>
<feature type="glycosylation site" description="N-linked (GlcNAc...) asparagine" evidence="1">
    <location>
        <position position="587"/>
    </location>
</feature>
<feature type="glycosylation site" description="N-linked (GlcNAc...) asparagine" evidence="1">
    <location>
        <position position="1357"/>
    </location>
</feature>
<feature type="glycosylation site" description="N-linked (GlcNAc...) asparagine" evidence="1">
    <location>
        <position position="1463"/>
    </location>
</feature>
<feature type="glycosylation site" description="N-linked (GlcNAc...) asparagine" evidence="1">
    <location>
        <position position="1596"/>
    </location>
</feature>
<feature type="disulfide bond" evidence="3">
    <location>
        <begin position="1451"/>
        <end position="1602"/>
    </location>
</feature>
<comment type="function">
    <text>Precursor of the egg-yolk proteins that are sources of nutrients during embryonic development.</text>
</comment>
<comment type="subunit">
    <text>Heterotetramer of two heavy and two light chains.</text>
</comment>
<comment type="subcellular location">
    <subcellularLocation>
        <location>Secreted</location>
    </subcellularLocation>
    <subcellularLocation>
        <location evidence="5">Cytoplasm</location>
    </subcellularLocation>
    <subcellularLocation>
        <location evidence="5">Cytoplasmic granule</location>
    </subcellularLocation>
    <text evidence="5">In 72 hr non-diapause eggs, detected in yolk granules.</text>
</comment>
<comment type="tissue specificity">
    <text evidence="5 6">Detected in oocytes (at protein level) (PubMed:15738639). Produced by the fat body, where it is cleaved before being secreted into hemolymph (PubMed:8193154). Sequestered then by a single class of receptor mediated endocytosis in the ovary (PubMed:8193154).</text>
</comment>
<comment type="developmental stage">
    <text>First detected in the female fat body on day-2 of spinning stage, reaching maximal levels at larval-pupal ecdysis and declining thereafter. Not found in the male tissues.</text>
</comment>
<comment type="induction">
    <text>By ecdysteroid and juvenile hormone.</text>
</comment>
<comment type="PTM">
    <text>Glycosylated and phosphorylated.</text>
</comment>
<sequence>MKLFVLAAIIAAVSSDRFSSQSQSTGGQTYPSPWQVGKQYRYEVTSRTLAHLQEGPSSGSAFKAQFTIRVKSPGRLQAKLENPQHGNFNEQLPDPRELPVDLKYQPTPNIDKVFEIEIDGGRIVSLDFPTSVPVPQENLIKGLISALQLDTSAHRVIHDSQNNYDREQQQGLFRKMETDVTGDCETLYTVSPVASEWRRELPKFANEQDPVEVTKSTNYGHCHHRVAYHFGVPVGAEWTGTAHKTQEQQLIGRATYSRILTGKEGPIYKAETTSTVHVHPHLYGKQKAEVYSHVHMELISVDQDSGAEWPRAGAMRPAQSILYSLSTKQMTKHYESSSSSSSSESHEFNFPEQHEHPHQSNQRSRRSYMRSKLVTVHKVLKKRNSESSSGSSSSSADSSSTYINDDIPDIDEPAYAALYMSPQPHADKKQNAMNAQKILQDIAQQLQNPNNMPKSDFLSKFNILVRLIASMSTEQLSQTSRSIETAKTSNNIIKSDMWMIFRDGVTQAGTLPAFKQIQSWIENKKIQEEEAAQVVVALPRTLRYPTKQIMTQFFNFARSPAVKDQMFLNSSALMAATKLINLGQVNNYTAHSYYPTHMYGRLTHKHDAFVLEEILPTLAADLKATVEYKDSTKAQVYIQAIGNLGHREILKVFAPYLEGKVEISTYLRTHIVKNLKTLAKLRDRHVRAVLFSILRNTAEPYPVRVAAIQSIFISHPTGEMMQAMAEMTHNDPSVEVRAVLKSAILSAAELQHPRNFYLSRTAQAARYLVTNEEFGYQHSFKFIDDSYDEDNDIGTFVISHIGSEDSLLPKDFKIVTNSKGGAWERNTIEASFSSAERFLDYLRDSVFAPHPKFDRAHKYSAEKIAKLLNIKNDEEEPLEASFYVDFMNNQRLFSFSESDLQQLSQYISEYMKKVESGAEKHYTKVYNQDQVSIMFPVASGMPFIFKYKEPAVIHFQSKLKGKFSFPSKDNKYYEANMIKDVQFTYAINIDGNVGFMDTLSNQYSSVGVVNKLQFNIPFKFGIEIKSGLIKFRVEPLHPDQDQTLVHYSVWPYSASQKKDSLVAISQDPATKIVERRSKVFSVDSKYGQSTHAVIYAQGYTYSSDWRNFGAKFTSRDYFTNLASLLTQEDIALTHFNLKHLCKQSQSKALTITAYYDEYYNQQNSGILTDATDRNDLSPNSETRRAEMVKLVSAGINKARVRVVDLSASFEGSQDQNYVLTGTWGDSPVDSKVQGMLFAGTKSATQGNQQINAVFATTKPEIHSLSFSKPLQSDLRAPFGMHFKYGQSGEIRVSGSFDRTKKYTTELENHPLAKQCSQQTTLNNFYQDSCHKAIVMAHAPDHVEFSVSFQDMSPQYRNFSYHTYRLYEYLGYWYTEANPLKLTQNGKMDFKIDFSYFDRTYTVDIASPSGEARMRDMPIATMAPGALSFYQPLKAYELVANYFTGHQYQPYCSIDGTRIHTFSNRSYEYPLSRSWHVVMQDESTQRGNWHELAILSRRQQRDQQEIYISYKSESGQDLEIEIQPASGDSAYQVKVTTNTKKITDDDLTMYWDDVKEQPFLQYHTHKDGVLVINIEDDRIRAIYDGQRFVVFTQDYRNSTRGICGRMSGEQRDDYLTPEGLVDKPELYAAAYSLNEENSDPKTQELKALATQQAYYPEYKYTSILRSDPTWQEESQSCGEDQWQSETVYKSRSYDKHKGACEVRQQVQFYENHGDICITTSRVPSCQSHCRAGDYKIQHVQVTCKSKLDHDFRMYKEQIKKGQNPEVSGIPSVKQFKVPVTCQP</sequence>
<proteinExistence type="evidence at protein level"/>
<evidence type="ECO:0000255" key="1"/>
<evidence type="ECO:0000255" key="2">
    <source>
        <dbReference type="PROSITE-ProRule" id="PRU00557"/>
    </source>
</evidence>
<evidence type="ECO:0000255" key="3">
    <source>
        <dbReference type="PROSITE-ProRule" id="PRU00580"/>
    </source>
</evidence>
<evidence type="ECO:0000256" key="4">
    <source>
        <dbReference type="SAM" id="MobiDB-lite"/>
    </source>
</evidence>
<evidence type="ECO:0000269" key="5">
    <source>
    </source>
</evidence>
<evidence type="ECO:0000269" key="6">
    <source>
    </source>
</evidence>
<gene>
    <name type="primary">VG</name>
</gene>